<proteinExistence type="evidence at protein level"/>
<gene>
    <name type="primary">Slc6a6</name>
</gene>
<name>SC6A6_RAT</name>
<feature type="chain" id="PRO_0000214769" description="Sodium- and chloride-dependent taurine transporter">
    <location>
        <begin position="1"/>
        <end position="621"/>
    </location>
</feature>
<feature type="topological domain" description="Cytoplasmic" evidence="3">
    <location>
        <begin position="1"/>
        <end position="49"/>
    </location>
</feature>
<feature type="transmembrane region" description="Helical; Name=1" evidence="3">
    <location>
        <begin position="50"/>
        <end position="70"/>
    </location>
</feature>
<feature type="transmembrane region" description="Helical; Name=2" evidence="3">
    <location>
        <begin position="78"/>
        <end position="97"/>
    </location>
</feature>
<feature type="transmembrane region" description="Helical; Name=3" evidence="3">
    <location>
        <begin position="122"/>
        <end position="142"/>
    </location>
</feature>
<feature type="topological domain" description="Extracellular" evidence="3">
    <location>
        <begin position="143"/>
        <end position="217"/>
    </location>
</feature>
<feature type="transmembrane region" description="Helical; Name=4" evidence="3">
    <location>
        <begin position="218"/>
        <end position="236"/>
    </location>
</feature>
<feature type="transmembrane region" description="Helical; Name=5" evidence="3">
    <location>
        <begin position="245"/>
        <end position="262"/>
    </location>
</feature>
<feature type="transmembrane region" description="Helical; Name=6" evidence="3">
    <location>
        <begin position="298"/>
        <end position="315"/>
    </location>
</feature>
<feature type="transmembrane region" description="Helical; Name=7" evidence="3">
    <location>
        <begin position="327"/>
        <end position="348"/>
    </location>
</feature>
<feature type="transmembrane region" description="Helical; Name=8" evidence="3">
    <location>
        <begin position="381"/>
        <end position="400"/>
    </location>
</feature>
<feature type="transmembrane region" description="Helical; Name=9" evidence="3">
    <location>
        <begin position="430"/>
        <end position="448"/>
    </location>
</feature>
<feature type="transmembrane region" description="Helical; Name=10" evidence="3">
    <location>
        <begin position="465"/>
        <end position="485"/>
    </location>
</feature>
<feature type="transmembrane region" description="Helical; Name=11" evidence="3">
    <location>
        <begin position="506"/>
        <end position="525"/>
    </location>
</feature>
<feature type="transmembrane region" description="Helical; Name=12" evidence="3">
    <location>
        <begin position="545"/>
        <end position="563"/>
    </location>
</feature>
<feature type="topological domain" description="Cytoplasmic" evidence="3">
    <location>
        <begin position="564"/>
        <end position="621"/>
    </location>
</feature>
<feature type="region of interest" description="Disordered" evidence="4">
    <location>
        <begin position="1"/>
        <end position="42"/>
    </location>
</feature>
<feature type="compositionally biased region" description="Basic and acidic residues" evidence="4">
    <location>
        <begin position="1"/>
        <end position="18"/>
    </location>
</feature>
<feature type="compositionally biased region" description="Basic and acidic residues" evidence="4">
    <location>
        <begin position="29"/>
        <end position="42"/>
    </location>
</feature>
<feature type="modified residue" description="Phosphoserine" evidence="2">
    <location>
        <position position="322"/>
    </location>
</feature>
<feature type="glycosylation site" description="N-linked (GlcNAc...) asparagine" evidence="3">
    <location>
        <position position="163"/>
    </location>
</feature>
<feature type="glycosylation site" description="N-linked (GlcNAc...) asparagine" evidence="3">
    <location>
        <position position="179"/>
    </location>
</feature>
<feature type="glycosylation site" description="N-linked (GlcNAc...) asparagine" evidence="3">
    <location>
        <position position="190"/>
    </location>
</feature>
<feature type="glycosylation site" description="N-linked (GlcNAc...) asparagine" evidence="3">
    <location>
        <position position="281"/>
    </location>
</feature>
<sequence length="621" mass="69869">MATKEKLQCLKDFHKDILKPSPGKSPGTRPEDEADGKPPQREKWSSKIDFVLSVAGGFVGLGNVWRFPYLCYKNGGGAFLIPYFIFLFGSGLPVFFLEVIIGQYTSEGGITCWEKICPLFSGIGYASIVIVSLLNVYYIVILAWATYYLFQSFQKDLPWAHCNHSWNTPQCMEDTLRRNESHWVSLSAANFTSPVIEFWERNVLSLSSGIDHPGSLKWDLALCLLLVWLVCFFCIWKGVRSTGKVVYFTATFPFAMLLVLLVRGLTLPGAGEGIKFYLYPNISRLEDPQVWIDAGTQIFFSYAICLGAMTSLGSYNKYKYNSYRDCMLLGCLNSGTSFVSGFAIFSILGFMAQEQGVDIADVAESGPGLAFIAYPKAVTMMPLPTFWSILFFIMLLLLGLDSQFVEVEGQITSLVDLYPSFLRKGYRREIFIAIVCSISYLLGLTMVTEGGMYVFQLFDYYAASGVCLLWVAFFECFVIAWIYGGDNLYDGIEDMIGYRPGPWMKYSWAVITPALCVGCFIFSLVKYVPLTYNKVYRYPDWAIGLGWGLALSSMVCIPLVIVILLCRTEGPLRVRIKYLITPREPNRWAVEREGATPFHSRATLMNGALMKPSHVIVETMM</sequence>
<protein>
    <recommendedName>
        <fullName>Sodium- and chloride-dependent taurine transporter</fullName>
    </recommendedName>
    <alternativeName>
        <fullName>Solute carrier family 6 member 6</fullName>
    </alternativeName>
</protein>
<evidence type="ECO:0000250" key="1">
    <source>
        <dbReference type="UniProtKB" id="O35316"/>
    </source>
</evidence>
<evidence type="ECO:0000250" key="2">
    <source>
        <dbReference type="UniProtKB" id="Q00589"/>
    </source>
</evidence>
<evidence type="ECO:0000255" key="3"/>
<evidence type="ECO:0000256" key="4">
    <source>
        <dbReference type="SAM" id="MobiDB-lite"/>
    </source>
</evidence>
<evidence type="ECO:0000269" key="5">
    <source>
    </source>
</evidence>
<evidence type="ECO:0000269" key="6">
    <source>
    </source>
</evidence>
<evidence type="ECO:0000269" key="7">
    <source>
    </source>
</evidence>
<evidence type="ECO:0000305" key="8"/>
<evidence type="ECO:0000305" key="9">
    <source>
    </source>
</evidence>
<evidence type="ECO:0000305" key="10">
    <source>
    </source>
</evidence>
<organism>
    <name type="scientific">Rattus norvegicus</name>
    <name type="common">Rat</name>
    <dbReference type="NCBI Taxonomy" id="10116"/>
    <lineage>
        <taxon>Eukaryota</taxon>
        <taxon>Metazoa</taxon>
        <taxon>Chordata</taxon>
        <taxon>Craniata</taxon>
        <taxon>Vertebrata</taxon>
        <taxon>Euteleostomi</taxon>
        <taxon>Mammalia</taxon>
        <taxon>Eutheria</taxon>
        <taxon>Euarchontoglires</taxon>
        <taxon>Glires</taxon>
        <taxon>Rodentia</taxon>
        <taxon>Myomorpha</taxon>
        <taxon>Muroidea</taxon>
        <taxon>Muridae</taxon>
        <taxon>Murinae</taxon>
        <taxon>Rattus</taxon>
    </lineage>
</organism>
<comment type="function">
    <text evidence="1 5 6 7">Mediates sodium- and chloride-dependent transport of taurine (PubMed:1435737, PubMed:18501699, PubMed:22896705). Mediates transport of gamma-aminobutyric acid (GABA) (PubMed:18501699). Can also mediate transport of beta-alanine and hypotaurine (By similarity).</text>
</comment>
<comment type="catalytic activity">
    <reaction evidence="6">
        <text>4-aminobutanoate(out) + chloride(out) + 2 Na(+)(out) = 4-aminobutanoate(in) + chloride(in) + 2 Na(+)(in)</text>
        <dbReference type="Rhea" id="RHEA:70687"/>
        <dbReference type="ChEBI" id="CHEBI:17996"/>
        <dbReference type="ChEBI" id="CHEBI:29101"/>
        <dbReference type="ChEBI" id="CHEBI:59888"/>
    </reaction>
    <physiologicalReaction direction="left-to-right" evidence="10">
        <dbReference type="Rhea" id="RHEA:70688"/>
    </physiologicalReaction>
</comment>
<comment type="catalytic activity">
    <reaction evidence="5 6 7">
        <text>taurine(out) + chloride(out) + 2 Na(+)(out) = taurine(in) + chloride(in) + 2 Na(+)(in)</text>
        <dbReference type="Rhea" id="RHEA:71223"/>
        <dbReference type="ChEBI" id="CHEBI:17996"/>
        <dbReference type="ChEBI" id="CHEBI:29101"/>
        <dbReference type="ChEBI" id="CHEBI:507393"/>
    </reaction>
    <physiologicalReaction direction="left-to-right" evidence="9">
        <dbReference type="Rhea" id="RHEA:71224"/>
    </physiologicalReaction>
</comment>
<comment type="catalytic activity">
    <reaction evidence="1">
        <text>beta-alanine(out) + chloride(out) + 2 Na(+)(out) = beta-alanine(in) + chloride(in) + 2 Na(+)(in)</text>
        <dbReference type="Rhea" id="RHEA:71247"/>
        <dbReference type="ChEBI" id="CHEBI:17996"/>
        <dbReference type="ChEBI" id="CHEBI:29101"/>
        <dbReference type="ChEBI" id="CHEBI:57966"/>
    </reaction>
    <physiologicalReaction direction="left-to-right" evidence="1">
        <dbReference type="Rhea" id="RHEA:71248"/>
    </physiologicalReaction>
</comment>
<comment type="catalytic activity">
    <reaction evidence="1">
        <text>hypotaurine(out) + chloride(out) + 2 Na(+)(out) = hypotaurine(in) + chloride(in) + 2 Na(+)(in)</text>
        <dbReference type="Rhea" id="RHEA:71243"/>
        <dbReference type="ChEBI" id="CHEBI:17996"/>
        <dbReference type="ChEBI" id="CHEBI:29101"/>
        <dbReference type="ChEBI" id="CHEBI:57853"/>
    </reaction>
    <physiologicalReaction direction="left-to-right" evidence="1">
        <dbReference type="Rhea" id="RHEA:71244"/>
    </physiologicalReaction>
</comment>
<comment type="activity regulation">
    <text evidence="5 6">Taurine transport activity is inhibited by beta-alanine and gamma-aminobutyric acid (GABA) (PubMed:1435737). GABA transport activity is inhibited by taurine and beta-alanine (PubMed:18501699).</text>
</comment>
<comment type="biophysicochemical properties">
    <kinetics>
        <KM evidence="5">43 uM for taurine</KM>
        <KM evidence="6">2 mM for GABA</KM>
        <Vmax evidence="5">0.96 nmol/min/mg enzyme for taurine</Vmax>
        <Vmax evidence="6">5.8 pmol/min/mg enzyme for GABA</Vmax>
    </kinetics>
</comment>
<comment type="subcellular location">
    <subcellularLocation>
        <location evidence="6">Cell membrane</location>
        <topology evidence="3">Multi-pass membrane protein</topology>
    </subcellularLocation>
</comment>
<comment type="tissue specificity">
    <text evidence="5">Brain and peripheral tissues.</text>
</comment>
<comment type="PTM">
    <text evidence="2">Taurine transport activity is down-regulated upon Ser-322 phosphorylation.</text>
</comment>
<comment type="similarity">
    <text evidence="8">Belongs to the sodium:neurotransmitter symporter (SNF) (TC 2.A.22) family. SLC6A6 subfamily.</text>
</comment>
<accession>P31643</accession>
<dbReference type="EMBL" id="M96601">
    <property type="protein sequence ID" value="AAA42304.1"/>
    <property type="molecule type" value="mRNA"/>
</dbReference>
<dbReference type="PIR" id="I57939">
    <property type="entry name" value="I57939"/>
</dbReference>
<dbReference type="RefSeq" id="NP_058902.1">
    <property type="nucleotide sequence ID" value="NM_017206.2"/>
</dbReference>
<dbReference type="RefSeq" id="XP_006236965.1">
    <property type="nucleotide sequence ID" value="XM_006236903.5"/>
</dbReference>
<dbReference type="RefSeq" id="XP_038963136.1">
    <property type="nucleotide sequence ID" value="XM_039107208.2"/>
</dbReference>
<dbReference type="SMR" id="P31643"/>
<dbReference type="FunCoup" id="P31643">
    <property type="interactions" value="83"/>
</dbReference>
<dbReference type="STRING" id="10116.ENSRNOP00000072080"/>
<dbReference type="GlyCosmos" id="P31643">
    <property type="glycosylation" value="4 sites, No reported glycans"/>
</dbReference>
<dbReference type="GlyGen" id="P31643">
    <property type="glycosylation" value="4 sites"/>
</dbReference>
<dbReference type="iPTMnet" id="P31643"/>
<dbReference type="PhosphoSitePlus" id="P31643"/>
<dbReference type="PaxDb" id="10116-ENSRNOP00000012875"/>
<dbReference type="Ensembl" id="ENSRNOT00000012875.7">
    <property type="protein sequence ID" value="ENSRNOP00000012875.4"/>
    <property type="gene ID" value="ENSRNOG00000009019.7"/>
</dbReference>
<dbReference type="GeneID" id="29464"/>
<dbReference type="KEGG" id="rno:29464"/>
<dbReference type="AGR" id="RGD:61912"/>
<dbReference type="CTD" id="6533"/>
<dbReference type="RGD" id="61912">
    <property type="gene designation" value="Slc6a6"/>
</dbReference>
<dbReference type="eggNOG" id="KOG3660">
    <property type="taxonomic scope" value="Eukaryota"/>
</dbReference>
<dbReference type="GeneTree" id="ENSGT00940000154583"/>
<dbReference type="HOGENOM" id="CLU_006855_9_5_1"/>
<dbReference type="InParanoid" id="P31643"/>
<dbReference type="OMA" id="WAHCNHT"/>
<dbReference type="PhylomeDB" id="P31643"/>
<dbReference type="TreeFam" id="TF343812"/>
<dbReference type="Reactome" id="R-RNO-352230">
    <property type="pathway name" value="Amino acid transport across the plasma membrane"/>
</dbReference>
<dbReference type="Reactome" id="R-RNO-442660">
    <property type="pathway name" value="Na+/Cl- dependent neurotransmitter transporters"/>
</dbReference>
<dbReference type="PRO" id="PR:P31643"/>
<dbReference type="Proteomes" id="UP000002494">
    <property type="component" value="Chromosome 4"/>
</dbReference>
<dbReference type="Bgee" id="ENSRNOG00000009019">
    <property type="expression patterns" value="Expressed in lung and 19 other cell types or tissues"/>
</dbReference>
<dbReference type="ExpressionAtlas" id="P31643">
    <property type="expression patterns" value="baseline and differential"/>
</dbReference>
<dbReference type="GO" id="GO:0016324">
    <property type="term" value="C:apical plasma membrane"/>
    <property type="evidence" value="ECO:0000266"/>
    <property type="project" value="RGD"/>
</dbReference>
<dbReference type="GO" id="GO:0016323">
    <property type="term" value="C:basolateral plasma membrane"/>
    <property type="evidence" value="ECO:0000266"/>
    <property type="project" value="RGD"/>
</dbReference>
<dbReference type="GO" id="GO:0042995">
    <property type="term" value="C:cell projection"/>
    <property type="evidence" value="ECO:0000318"/>
    <property type="project" value="GO_Central"/>
</dbReference>
<dbReference type="GO" id="GO:0030425">
    <property type="term" value="C:dendrite"/>
    <property type="evidence" value="ECO:0000314"/>
    <property type="project" value="ARUK-UCL"/>
</dbReference>
<dbReference type="GO" id="GO:0098982">
    <property type="term" value="C:GABA-ergic synapse"/>
    <property type="evidence" value="ECO:0000266"/>
    <property type="project" value="RGD"/>
</dbReference>
<dbReference type="GO" id="GO:0031528">
    <property type="term" value="C:microvillus membrane"/>
    <property type="evidence" value="ECO:0000266"/>
    <property type="project" value="RGD"/>
</dbReference>
<dbReference type="GO" id="GO:0043025">
    <property type="term" value="C:neuronal cell body"/>
    <property type="evidence" value="ECO:0000314"/>
    <property type="project" value="ARUK-UCL"/>
</dbReference>
<dbReference type="GO" id="GO:0005886">
    <property type="term" value="C:plasma membrane"/>
    <property type="evidence" value="ECO:0000314"/>
    <property type="project" value="ARUK-UCL"/>
</dbReference>
<dbReference type="GO" id="GO:0098797">
    <property type="term" value="C:plasma membrane protein complex"/>
    <property type="evidence" value="ECO:0000353"/>
    <property type="project" value="ARUK-UCL"/>
</dbReference>
<dbReference type="GO" id="GO:0045211">
    <property type="term" value="C:postsynaptic membrane"/>
    <property type="evidence" value="ECO:0000266"/>
    <property type="project" value="RGD"/>
</dbReference>
<dbReference type="GO" id="GO:0022858">
    <property type="term" value="F:alanine transmembrane transporter activity"/>
    <property type="evidence" value="ECO:0000266"/>
    <property type="project" value="RGD"/>
</dbReference>
<dbReference type="GO" id="GO:0015171">
    <property type="term" value="F:amino acid transmembrane transporter activity"/>
    <property type="evidence" value="ECO:0000266"/>
    <property type="project" value="RGD"/>
</dbReference>
<dbReference type="GO" id="GO:0005283">
    <property type="term" value="F:amino acid:sodium symporter activity"/>
    <property type="evidence" value="ECO:0000266"/>
    <property type="project" value="RGD"/>
</dbReference>
<dbReference type="GO" id="GO:0001761">
    <property type="term" value="F:beta-alanine transmembrane transporter activity"/>
    <property type="evidence" value="ECO:0000266"/>
    <property type="project" value="RGD"/>
</dbReference>
<dbReference type="GO" id="GO:0015185">
    <property type="term" value="F:gamma-aminobutyric acid transmembrane transporter activity"/>
    <property type="evidence" value="ECO:0000314"/>
    <property type="project" value="ARUK-UCL"/>
</dbReference>
<dbReference type="GO" id="GO:0005332">
    <property type="term" value="F:gamma-aminobutyric acid:sodium:chloride symporter activity"/>
    <property type="evidence" value="ECO:0000314"/>
    <property type="project" value="UniProtKB"/>
</dbReference>
<dbReference type="GO" id="GO:0030977">
    <property type="term" value="F:taurine binding"/>
    <property type="evidence" value="ECO:0000314"/>
    <property type="project" value="RGD"/>
</dbReference>
<dbReference type="GO" id="GO:0005368">
    <property type="term" value="F:taurine transmembrane transporter activity"/>
    <property type="evidence" value="ECO:0000314"/>
    <property type="project" value="ARUK-UCL"/>
</dbReference>
<dbReference type="GO" id="GO:0005369">
    <property type="term" value="F:taurine:sodium symporter activity"/>
    <property type="evidence" value="ECO:0000314"/>
    <property type="project" value="UniProtKB"/>
</dbReference>
<dbReference type="GO" id="GO:0032328">
    <property type="term" value="P:alanine transport"/>
    <property type="evidence" value="ECO:0000266"/>
    <property type="project" value="RGD"/>
</dbReference>
<dbReference type="GO" id="GO:0089718">
    <property type="term" value="P:amino acid import across plasma membrane"/>
    <property type="evidence" value="ECO:0000266"/>
    <property type="project" value="RGD"/>
</dbReference>
<dbReference type="GO" id="GO:0006865">
    <property type="term" value="P:amino acid transport"/>
    <property type="evidence" value="ECO:0000318"/>
    <property type="project" value="GO_Central"/>
</dbReference>
<dbReference type="GO" id="GO:0001762">
    <property type="term" value="P:beta-alanine transport"/>
    <property type="evidence" value="ECO:0000266"/>
    <property type="project" value="RGD"/>
</dbReference>
<dbReference type="GO" id="GO:0051939">
    <property type="term" value="P:gamma-aminobutyric acid import"/>
    <property type="evidence" value="ECO:0000314"/>
    <property type="project" value="ARUK-UCL"/>
</dbReference>
<dbReference type="GO" id="GO:0098739">
    <property type="term" value="P:import across plasma membrane"/>
    <property type="evidence" value="ECO:0000316"/>
    <property type="project" value="ARUK-UCL"/>
</dbReference>
<dbReference type="GO" id="GO:0050804">
    <property type="term" value="P:modulation of chemical synaptic transmission"/>
    <property type="evidence" value="ECO:0000266"/>
    <property type="project" value="RGD"/>
</dbReference>
<dbReference type="GO" id="GO:0006836">
    <property type="term" value="P:neurotransmitter transport"/>
    <property type="evidence" value="ECO:0007669"/>
    <property type="project" value="UniProtKB-KW"/>
</dbReference>
<dbReference type="GO" id="GO:0045597">
    <property type="term" value="P:positive regulation of cell differentiation"/>
    <property type="evidence" value="ECO:0000266"/>
    <property type="project" value="RGD"/>
</dbReference>
<dbReference type="GO" id="GO:0035725">
    <property type="term" value="P:sodium ion transmembrane transport"/>
    <property type="evidence" value="ECO:0000318"/>
    <property type="project" value="GO_Central"/>
</dbReference>
<dbReference type="GO" id="GO:0015734">
    <property type="term" value="P:taurine transmembrane transport"/>
    <property type="evidence" value="ECO:0000314"/>
    <property type="project" value="ARUK-UCL"/>
</dbReference>
<dbReference type="InterPro" id="IPR000175">
    <property type="entry name" value="Na/ntran_symport"/>
</dbReference>
<dbReference type="InterPro" id="IPR002434">
    <property type="entry name" value="Na/ntran_symport_taurine"/>
</dbReference>
<dbReference type="InterPro" id="IPR037272">
    <property type="entry name" value="SNS_sf"/>
</dbReference>
<dbReference type="PANTHER" id="PTHR11616:SF141">
    <property type="entry name" value="SODIUM- AND CHLORIDE-DEPENDENT TAURINE TRANSPORTER"/>
    <property type="match status" value="1"/>
</dbReference>
<dbReference type="PANTHER" id="PTHR11616">
    <property type="entry name" value="SODIUM/CHLORIDE DEPENDENT TRANSPORTER"/>
    <property type="match status" value="1"/>
</dbReference>
<dbReference type="Pfam" id="PF00209">
    <property type="entry name" value="SNF"/>
    <property type="match status" value="1"/>
</dbReference>
<dbReference type="PRINTS" id="PR00176">
    <property type="entry name" value="NANEUSMPORT"/>
</dbReference>
<dbReference type="PRINTS" id="PR01200">
    <property type="entry name" value="TAUTRANSPORT"/>
</dbReference>
<dbReference type="SUPFAM" id="SSF161070">
    <property type="entry name" value="SNF-like"/>
    <property type="match status" value="1"/>
</dbReference>
<dbReference type="PROSITE" id="PS00610">
    <property type="entry name" value="NA_NEUROTRAN_SYMP_1"/>
    <property type="match status" value="1"/>
</dbReference>
<dbReference type="PROSITE" id="PS00754">
    <property type="entry name" value="NA_NEUROTRAN_SYMP_2"/>
    <property type="match status" value="1"/>
</dbReference>
<dbReference type="PROSITE" id="PS50267">
    <property type="entry name" value="NA_NEUROTRAN_SYMP_3"/>
    <property type="match status" value="1"/>
</dbReference>
<reference key="1">
    <citation type="journal article" date="1992" name="Mol. Pharmacol.">
        <title>Cloning and expression of a high affinity taurine transporter from rat brain.</title>
        <authorList>
            <person name="Smith K.E."/>
            <person name="Borden L.A."/>
            <person name="Wang C.H.D."/>
            <person name="Hartig P.R."/>
            <person name="Branchek T.A."/>
            <person name="Weinshank R.L."/>
        </authorList>
    </citation>
    <scope>NUCLEOTIDE SEQUENCE [MRNA]</scope>
    <scope>TISSUE SPECIFICITY</scope>
    <scope>FUNCTION</scope>
    <scope>TRANSPORTER ACTIVITY</scope>
    <scope>BIOPHYSICOCHEMICAL PROPERTIES</scope>
    <scope>ACTIVITY REGULATION</scope>
    <source>
        <strain>Sprague-Dawley</strain>
        <tissue>Brain</tissue>
    </source>
</reference>
<reference key="2">
    <citation type="journal article" date="2008" name="Biochim. Biophys. Acta">
        <title>Function of taurine transporter (Slc6a6/TauT) as a GABA transporting protein and its relevance to GABA transport in rat retinal capillary endothelial cells.</title>
        <authorList>
            <person name="Tomi M."/>
            <person name="Tajima A."/>
            <person name="Tachikawa M."/>
            <person name="Hosoya K."/>
        </authorList>
    </citation>
    <scope>FUNCTION</scope>
    <scope>TRANSPORTER ACTIVITY</scope>
    <scope>BIOPHYSICOCHEMICAL PROPERTIES</scope>
    <scope>ACTIVITY REGULATION</scope>
    <scope>SUBCELLULAR LOCATION</scope>
</reference>
<reference key="3">
    <citation type="journal article" date="2012" name="J. Biol. Chem.">
        <title>Deletion of the gamma-aminobutyric acid transporter 2 (GAT2 and SLC6A13) gene in mice leads to changes in liver and brain taurine contents.</title>
        <authorList>
            <person name="Zhou Y."/>
            <person name="Holmseth S."/>
            <person name="Guo C."/>
            <person name="Hassel B."/>
            <person name="Hofner G."/>
            <person name="Huitfeldt H.S."/>
            <person name="Wanner K.T."/>
            <person name="Danbolt N.C."/>
        </authorList>
    </citation>
    <scope>FUNCTION</scope>
    <scope>TRANSPORTER ACTIVITY</scope>
</reference>
<keyword id="KW-1003">Cell membrane</keyword>
<keyword id="KW-0325">Glycoprotein</keyword>
<keyword id="KW-0472">Membrane</keyword>
<keyword id="KW-0532">Neurotransmitter transport</keyword>
<keyword id="KW-0597">Phosphoprotein</keyword>
<keyword id="KW-1185">Reference proteome</keyword>
<keyword id="KW-0769">Symport</keyword>
<keyword id="KW-0812">Transmembrane</keyword>
<keyword id="KW-1133">Transmembrane helix</keyword>
<keyword id="KW-0813">Transport</keyword>